<organism>
    <name type="scientific">Haemophilus ducreyi (strain 35000HP / ATCC 700724)</name>
    <dbReference type="NCBI Taxonomy" id="233412"/>
    <lineage>
        <taxon>Bacteria</taxon>
        <taxon>Pseudomonadati</taxon>
        <taxon>Pseudomonadota</taxon>
        <taxon>Gammaproteobacteria</taxon>
        <taxon>Pasteurellales</taxon>
        <taxon>Pasteurellaceae</taxon>
        <taxon>Haemophilus</taxon>
    </lineage>
</organism>
<sequence>MSYTVIYAGTFDPITNGHLDIITRATKLFAKVIVAVAQNPTKQPLFSLSERTALVAQSCSHLTNVEAVSFSGLLADFARQHHAKALIRGIRGSDDIEYEIQLSQLNNKLADGLETVFLPPAVEWRYLSSTMIREIYYHQGQVNAFVPTAVVQALQNRKNNE</sequence>
<accession>Q7VNN7</accession>
<reference key="1">
    <citation type="submission" date="2003-06" db="EMBL/GenBank/DDBJ databases">
        <title>The complete genome sequence of Haemophilus ducreyi.</title>
        <authorList>
            <person name="Munson R.S. Jr."/>
            <person name="Ray W.C."/>
            <person name="Mahairas G."/>
            <person name="Sabo P."/>
            <person name="Mungur R."/>
            <person name="Johnson L."/>
            <person name="Nguyen D."/>
            <person name="Wang J."/>
            <person name="Forst C."/>
            <person name="Hood L."/>
        </authorList>
    </citation>
    <scope>NUCLEOTIDE SEQUENCE [LARGE SCALE GENOMIC DNA]</scope>
    <source>
        <strain>35000HP / ATCC 700724</strain>
    </source>
</reference>
<feature type="chain" id="PRO_0000156214" description="Phosphopantetheine adenylyltransferase">
    <location>
        <begin position="1"/>
        <end position="161"/>
    </location>
</feature>
<feature type="binding site" evidence="1">
    <location>
        <begin position="10"/>
        <end position="11"/>
    </location>
    <ligand>
        <name>ATP</name>
        <dbReference type="ChEBI" id="CHEBI:30616"/>
    </ligand>
</feature>
<feature type="binding site" evidence="1">
    <location>
        <position position="10"/>
    </location>
    <ligand>
        <name>substrate</name>
    </ligand>
</feature>
<feature type="binding site" evidence="1">
    <location>
        <position position="18"/>
    </location>
    <ligand>
        <name>ATP</name>
        <dbReference type="ChEBI" id="CHEBI:30616"/>
    </ligand>
</feature>
<feature type="binding site" evidence="1">
    <location>
        <position position="42"/>
    </location>
    <ligand>
        <name>substrate</name>
    </ligand>
</feature>
<feature type="binding site" evidence="1">
    <location>
        <position position="74"/>
    </location>
    <ligand>
        <name>substrate</name>
    </ligand>
</feature>
<feature type="binding site" evidence="1">
    <location>
        <position position="88"/>
    </location>
    <ligand>
        <name>substrate</name>
    </ligand>
</feature>
<feature type="binding site" evidence="1">
    <location>
        <begin position="89"/>
        <end position="91"/>
    </location>
    <ligand>
        <name>ATP</name>
        <dbReference type="ChEBI" id="CHEBI:30616"/>
    </ligand>
</feature>
<feature type="binding site" evidence="1">
    <location>
        <position position="99"/>
    </location>
    <ligand>
        <name>ATP</name>
        <dbReference type="ChEBI" id="CHEBI:30616"/>
    </ligand>
</feature>
<feature type="binding site" evidence="1">
    <location>
        <begin position="124"/>
        <end position="130"/>
    </location>
    <ligand>
        <name>ATP</name>
        <dbReference type="ChEBI" id="CHEBI:30616"/>
    </ligand>
</feature>
<feature type="site" description="Transition state stabilizer" evidence="1">
    <location>
        <position position="18"/>
    </location>
</feature>
<gene>
    <name evidence="1" type="primary">coaD</name>
    <name type="ordered locus">HD_0453</name>
</gene>
<evidence type="ECO:0000255" key="1">
    <source>
        <dbReference type="HAMAP-Rule" id="MF_00151"/>
    </source>
</evidence>
<comment type="function">
    <text evidence="1">Reversibly transfers an adenylyl group from ATP to 4'-phosphopantetheine, yielding dephospho-CoA (dPCoA) and pyrophosphate.</text>
</comment>
<comment type="catalytic activity">
    <reaction evidence="1">
        <text>(R)-4'-phosphopantetheine + ATP + H(+) = 3'-dephospho-CoA + diphosphate</text>
        <dbReference type="Rhea" id="RHEA:19801"/>
        <dbReference type="ChEBI" id="CHEBI:15378"/>
        <dbReference type="ChEBI" id="CHEBI:30616"/>
        <dbReference type="ChEBI" id="CHEBI:33019"/>
        <dbReference type="ChEBI" id="CHEBI:57328"/>
        <dbReference type="ChEBI" id="CHEBI:61723"/>
        <dbReference type="EC" id="2.7.7.3"/>
    </reaction>
</comment>
<comment type="cofactor">
    <cofactor evidence="1">
        <name>Mg(2+)</name>
        <dbReference type="ChEBI" id="CHEBI:18420"/>
    </cofactor>
</comment>
<comment type="pathway">
    <text evidence="1">Cofactor biosynthesis; coenzyme A biosynthesis; CoA from (R)-pantothenate: step 4/5.</text>
</comment>
<comment type="subunit">
    <text evidence="1">Homohexamer.</text>
</comment>
<comment type="subcellular location">
    <subcellularLocation>
        <location evidence="1">Cytoplasm</location>
    </subcellularLocation>
</comment>
<comment type="similarity">
    <text evidence="1">Belongs to the bacterial CoaD family.</text>
</comment>
<protein>
    <recommendedName>
        <fullName evidence="1">Phosphopantetheine adenylyltransferase</fullName>
        <ecNumber evidence="1">2.7.7.3</ecNumber>
    </recommendedName>
    <alternativeName>
        <fullName evidence="1">Dephospho-CoA pyrophosphorylase</fullName>
    </alternativeName>
    <alternativeName>
        <fullName evidence="1">Pantetheine-phosphate adenylyltransferase</fullName>
        <shortName evidence="1">PPAT</shortName>
    </alternativeName>
</protein>
<dbReference type="EC" id="2.7.7.3" evidence="1"/>
<dbReference type="EMBL" id="AE017143">
    <property type="protein sequence ID" value="AAP95415.1"/>
    <property type="molecule type" value="Genomic_DNA"/>
</dbReference>
<dbReference type="RefSeq" id="WP_010944468.1">
    <property type="nucleotide sequence ID" value="NC_002940.2"/>
</dbReference>
<dbReference type="SMR" id="Q7VNN7"/>
<dbReference type="STRING" id="233412.HD_0453"/>
<dbReference type="KEGG" id="hdu:HD_0453"/>
<dbReference type="eggNOG" id="COG0669">
    <property type="taxonomic scope" value="Bacteria"/>
</dbReference>
<dbReference type="HOGENOM" id="CLU_100149_0_1_6"/>
<dbReference type="OrthoDB" id="9806661at2"/>
<dbReference type="UniPathway" id="UPA00241">
    <property type="reaction ID" value="UER00355"/>
</dbReference>
<dbReference type="Proteomes" id="UP000001022">
    <property type="component" value="Chromosome"/>
</dbReference>
<dbReference type="GO" id="GO:0005737">
    <property type="term" value="C:cytoplasm"/>
    <property type="evidence" value="ECO:0007669"/>
    <property type="project" value="UniProtKB-SubCell"/>
</dbReference>
<dbReference type="GO" id="GO:0005524">
    <property type="term" value="F:ATP binding"/>
    <property type="evidence" value="ECO:0007669"/>
    <property type="project" value="UniProtKB-KW"/>
</dbReference>
<dbReference type="GO" id="GO:0004595">
    <property type="term" value="F:pantetheine-phosphate adenylyltransferase activity"/>
    <property type="evidence" value="ECO:0007669"/>
    <property type="project" value="UniProtKB-UniRule"/>
</dbReference>
<dbReference type="GO" id="GO:0015937">
    <property type="term" value="P:coenzyme A biosynthetic process"/>
    <property type="evidence" value="ECO:0007669"/>
    <property type="project" value="UniProtKB-UniRule"/>
</dbReference>
<dbReference type="CDD" id="cd02163">
    <property type="entry name" value="PPAT"/>
    <property type="match status" value="1"/>
</dbReference>
<dbReference type="Gene3D" id="3.40.50.620">
    <property type="entry name" value="HUPs"/>
    <property type="match status" value="1"/>
</dbReference>
<dbReference type="HAMAP" id="MF_00151">
    <property type="entry name" value="PPAT_bact"/>
    <property type="match status" value="1"/>
</dbReference>
<dbReference type="InterPro" id="IPR004821">
    <property type="entry name" value="Cyt_trans-like"/>
</dbReference>
<dbReference type="InterPro" id="IPR001980">
    <property type="entry name" value="PPAT"/>
</dbReference>
<dbReference type="InterPro" id="IPR014729">
    <property type="entry name" value="Rossmann-like_a/b/a_fold"/>
</dbReference>
<dbReference type="NCBIfam" id="TIGR01510">
    <property type="entry name" value="coaD_prev_kdtB"/>
    <property type="match status" value="1"/>
</dbReference>
<dbReference type="NCBIfam" id="TIGR00125">
    <property type="entry name" value="cyt_tran_rel"/>
    <property type="match status" value="1"/>
</dbReference>
<dbReference type="PANTHER" id="PTHR21342">
    <property type="entry name" value="PHOSPHOPANTETHEINE ADENYLYLTRANSFERASE"/>
    <property type="match status" value="1"/>
</dbReference>
<dbReference type="PANTHER" id="PTHR21342:SF1">
    <property type="entry name" value="PHOSPHOPANTETHEINE ADENYLYLTRANSFERASE"/>
    <property type="match status" value="1"/>
</dbReference>
<dbReference type="Pfam" id="PF01467">
    <property type="entry name" value="CTP_transf_like"/>
    <property type="match status" value="1"/>
</dbReference>
<dbReference type="PRINTS" id="PR01020">
    <property type="entry name" value="LPSBIOSNTHSS"/>
</dbReference>
<dbReference type="SUPFAM" id="SSF52374">
    <property type="entry name" value="Nucleotidylyl transferase"/>
    <property type="match status" value="1"/>
</dbReference>
<name>COAD_HAEDU</name>
<keyword id="KW-0067">ATP-binding</keyword>
<keyword id="KW-0173">Coenzyme A biosynthesis</keyword>
<keyword id="KW-0963">Cytoplasm</keyword>
<keyword id="KW-0460">Magnesium</keyword>
<keyword id="KW-0547">Nucleotide-binding</keyword>
<keyword id="KW-0548">Nucleotidyltransferase</keyword>
<keyword id="KW-1185">Reference proteome</keyword>
<keyword id="KW-0808">Transferase</keyword>
<proteinExistence type="inferred from homology"/>